<feature type="chain" id="PRO_1000214957" description="Large ribosomal subunit protein uL13">
    <location>
        <begin position="1"/>
        <end position="145"/>
    </location>
</feature>
<gene>
    <name evidence="1" type="primary">rplM</name>
    <name type="ordered locus">Lm4b_02564</name>
</gene>
<keyword id="KW-0687">Ribonucleoprotein</keyword>
<keyword id="KW-0689">Ribosomal protein</keyword>
<evidence type="ECO:0000255" key="1">
    <source>
        <dbReference type="HAMAP-Rule" id="MF_01366"/>
    </source>
</evidence>
<evidence type="ECO:0000305" key="2"/>
<sequence length="145" mass="16200">MRTTYMAKPGEVERKWYVIDATGVSLGRLSSEVASILRGKNKPQFTPHIDTGDFVIIINAGKIGLTGKKATDKIYYRHSQYPGGLKSRTAGEMRTNNPEKLLELSIKGMLPKNSLGRQLFKKLHVYGGSEHEHAAQQPEVYELRG</sequence>
<accession>C1KZ12</accession>
<name>RL13_LISMC</name>
<comment type="function">
    <text evidence="1">This protein is one of the early assembly proteins of the 50S ribosomal subunit, although it is not seen to bind rRNA by itself. It is important during the early stages of 50S assembly.</text>
</comment>
<comment type="subunit">
    <text evidence="1">Part of the 50S ribosomal subunit.</text>
</comment>
<comment type="similarity">
    <text evidence="1">Belongs to the universal ribosomal protein uL13 family.</text>
</comment>
<dbReference type="EMBL" id="FM242711">
    <property type="protein sequence ID" value="CAS06319.1"/>
    <property type="molecule type" value="Genomic_DNA"/>
</dbReference>
<dbReference type="RefSeq" id="WP_003727703.1">
    <property type="nucleotide sequence ID" value="NC_012488.1"/>
</dbReference>
<dbReference type="SMR" id="C1KZ12"/>
<dbReference type="GeneID" id="61190471"/>
<dbReference type="KEGG" id="lmc:Lm4b_02564"/>
<dbReference type="HOGENOM" id="CLU_082184_2_2_9"/>
<dbReference type="GO" id="GO:0022625">
    <property type="term" value="C:cytosolic large ribosomal subunit"/>
    <property type="evidence" value="ECO:0007669"/>
    <property type="project" value="TreeGrafter"/>
</dbReference>
<dbReference type="GO" id="GO:0003729">
    <property type="term" value="F:mRNA binding"/>
    <property type="evidence" value="ECO:0007669"/>
    <property type="project" value="TreeGrafter"/>
</dbReference>
<dbReference type="GO" id="GO:0003735">
    <property type="term" value="F:structural constituent of ribosome"/>
    <property type="evidence" value="ECO:0007669"/>
    <property type="project" value="InterPro"/>
</dbReference>
<dbReference type="GO" id="GO:0017148">
    <property type="term" value="P:negative regulation of translation"/>
    <property type="evidence" value="ECO:0007669"/>
    <property type="project" value="TreeGrafter"/>
</dbReference>
<dbReference type="GO" id="GO:0006412">
    <property type="term" value="P:translation"/>
    <property type="evidence" value="ECO:0007669"/>
    <property type="project" value="UniProtKB-UniRule"/>
</dbReference>
<dbReference type="CDD" id="cd00392">
    <property type="entry name" value="Ribosomal_L13"/>
    <property type="match status" value="1"/>
</dbReference>
<dbReference type="FunFam" id="3.90.1180.10:FF:000001">
    <property type="entry name" value="50S ribosomal protein L13"/>
    <property type="match status" value="1"/>
</dbReference>
<dbReference type="Gene3D" id="3.90.1180.10">
    <property type="entry name" value="Ribosomal protein L13"/>
    <property type="match status" value="1"/>
</dbReference>
<dbReference type="HAMAP" id="MF_01366">
    <property type="entry name" value="Ribosomal_uL13"/>
    <property type="match status" value="1"/>
</dbReference>
<dbReference type="InterPro" id="IPR005822">
    <property type="entry name" value="Ribosomal_uL13"/>
</dbReference>
<dbReference type="InterPro" id="IPR005823">
    <property type="entry name" value="Ribosomal_uL13_bac-type"/>
</dbReference>
<dbReference type="InterPro" id="IPR023563">
    <property type="entry name" value="Ribosomal_uL13_CS"/>
</dbReference>
<dbReference type="InterPro" id="IPR036899">
    <property type="entry name" value="Ribosomal_uL13_sf"/>
</dbReference>
<dbReference type="NCBIfam" id="TIGR01066">
    <property type="entry name" value="rplM_bact"/>
    <property type="match status" value="1"/>
</dbReference>
<dbReference type="PANTHER" id="PTHR11545:SF2">
    <property type="entry name" value="LARGE RIBOSOMAL SUBUNIT PROTEIN UL13M"/>
    <property type="match status" value="1"/>
</dbReference>
<dbReference type="PANTHER" id="PTHR11545">
    <property type="entry name" value="RIBOSOMAL PROTEIN L13"/>
    <property type="match status" value="1"/>
</dbReference>
<dbReference type="Pfam" id="PF00572">
    <property type="entry name" value="Ribosomal_L13"/>
    <property type="match status" value="1"/>
</dbReference>
<dbReference type="PIRSF" id="PIRSF002181">
    <property type="entry name" value="Ribosomal_L13"/>
    <property type="match status" value="1"/>
</dbReference>
<dbReference type="SUPFAM" id="SSF52161">
    <property type="entry name" value="Ribosomal protein L13"/>
    <property type="match status" value="1"/>
</dbReference>
<dbReference type="PROSITE" id="PS00783">
    <property type="entry name" value="RIBOSOMAL_L13"/>
    <property type="match status" value="1"/>
</dbReference>
<protein>
    <recommendedName>
        <fullName evidence="1">Large ribosomal subunit protein uL13</fullName>
    </recommendedName>
    <alternativeName>
        <fullName evidence="2">50S ribosomal protein L13</fullName>
    </alternativeName>
</protein>
<proteinExistence type="inferred from homology"/>
<reference key="1">
    <citation type="journal article" date="2012" name="BMC Genomics">
        <title>Comparative genomics and transcriptomics of lineages I, II, and III strains of Listeria monocytogenes.</title>
        <authorList>
            <person name="Hain T."/>
            <person name="Ghai R."/>
            <person name="Billion A."/>
            <person name="Kuenne C.T."/>
            <person name="Steinweg C."/>
            <person name="Izar B."/>
            <person name="Mohamed W."/>
            <person name="Mraheil M."/>
            <person name="Domann E."/>
            <person name="Schaffrath S."/>
            <person name="Karst U."/>
            <person name="Goesmann A."/>
            <person name="Oehm S."/>
            <person name="Puhler A."/>
            <person name="Merkl R."/>
            <person name="Vorwerk S."/>
            <person name="Glaser P."/>
            <person name="Garrido P."/>
            <person name="Rusniok C."/>
            <person name="Buchrieser C."/>
            <person name="Goebel W."/>
            <person name="Chakraborty T."/>
        </authorList>
    </citation>
    <scope>NUCLEOTIDE SEQUENCE [LARGE SCALE GENOMIC DNA]</scope>
    <source>
        <strain>CLIP80459</strain>
    </source>
</reference>
<organism>
    <name type="scientific">Listeria monocytogenes serotype 4b (strain CLIP80459)</name>
    <dbReference type="NCBI Taxonomy" id="568819"/>
    <lineage>
        <taxon>Bacteria</taxon>
        <taxon>Bacillati</taxon>
        <taxon>Bacillota</taxon>
        <taxon>Bacilli</taxon>
        <taxon>Bacillales</taxon>
        <taxon>Listeriaceae</taxon>
        <taxon>Listeria</taxon>
    </lineage>
</organism>